<keyword id="KW-0244">Early protein</keyword>
<keyword id="KW-1035">Host cytoplasm</keyword>
<keyword id="KW-1079">Host G2/M cell cycle arrest by virus</keyword>
<keyword id="KW-1048">Host nucleus</keyword>
<keyword id="KW-0945">Host-virus interaction</keyword>
<keyword id="KW-1121">Modulation of host cell cycle by virus</keyword>
<keyword id="KW-0597">Phosphoprotein</keyword>
<comment type="function">
    <text evidence="1">Contributes to multiple aspects of the viral life cycle including viral genome amplification, suppression of suprabasal cell differentiation and egress of newly formed virions. Induces host cell cycle arrest at the G2 phase by associating with and preventing the nuclear entry of host CDK1/cyclin B1 complexes. Inhibits cellular DNA replication by preventing loading of host replication licensing proteins MCM2 and MCM7 onto chromatin. Within the cytoplasm, associates with host kinase SRPK1, a splicing factor regulator, and inhibits its activity. Therefore, E4 favors expression of late viral transcripts by inhibiting SRPK1-mediated phosphorylation of host serine-arginine (SR) proteins that have critical roles in mRNA metabolism. Late in the infectious cycle, E4 also acts to diminish the integrity of the keratinocyte by disrupting the keratin cytoskeleton and inducing apoptosis through alteration of mitochondrial function to facilitate egress of the newly formed virions.</text>
</comment>
<comment type="subunit">
    <text evidence="1">Assembles into oligomeric complexes. Interacts with host CDK1. Interacts with host SRPK1; this interaction may favor expression of late viral transcripts. Interacts with host cytokeratin components KRT8 and KRT18.</text>
</comment>
<comment type="subcellular location">
    <subcellularLocation>
        <location evidence="1">Host cytoplasm</location>
    </subcellularLocation>
    <subcellularLocation>
        <location evidence="1">Host nucleus</location>
    </subcellularLocation>
</comment>
<comment type="PTM">
    <text evidence="1">Phosphorylated by host ERK. The phosphorylation triggers a structural change that enhances keratin binding and protein stability.</text>
</comment>
<comment type="miscellaneous">
    <text evidence="1">The major E4 form is first synthesized as an E1^E4 fusion protein from spliced E1^E4 transcripts, such that the first few amino acids of the E4 protein are derived from the N terminus of E1.</text>
</comment>
<comment type="similarity">
    <text evidence="3">Belongs to the papillomaviridae E4 protein family.</text>
</comment>
<proteinExistence type="inferred from homology"/>
<dbReference type="EMBL" id="M12737">
    <property type="status" value="NOT_ANNOTATED_CDS"/>
    <property type="molecule type" value="Genomic_DNA"/>
</dbReference>
<dbReference type="PIR" id="A03677">
    <property type="entry name" value="W4WL8"/>
</dbReference>
<dbReference type="SMR" id="P06425"/>
<dbReference type="Proteomes" id="UP000009103">
    <property type="component" value="Segment"/>
</dbReference>
<dbReference type="GO" id="GO:0030430">
    <property type="term" value="C:host cell cytoplasm"/>
    <property type="evidence" value="ECO:0007669"/>
    <property type="project" value="UniProtKB-SubCell"/>
</dbReference>
<dbReference type="GO" id="GO:0042025">
    <property type="term" value="C:host cell nucleus"/>
    <property type="evidence" value="ECO:0007669"/>
    <property type="project" value="UniProtKB-SubCell"/>
</dbReference>
<dbReference type="GO" id="GO:0039592">
    <property type="term" value="P:symbiont-mediated arrest of host cell cycle during G2/M transition"/>
    <property type="evidence" value="ECO:0007669"/>
    <property type="project" value="UniProtKB-KW"/>
</dbReference>
<accession>P06425</accession>
<organism>
    <name type="scientific">Human papillomavirus type 8</name>
    <dbReference type="NCBI Taxonomy" id="10579"/>
    <lineage>
        <taxon>Viruses</taxon>
        <taxon>Monodnaviria</taxon>
        <taxon>Shotokuvirae</taxon>
        <taxon>Cossaviricota</taxon>
        <taxon>Papovaviricetes</taxon>
        <taxon>Zurhausenvirales</taxon>
        <taxon>Papillomaviridae</taxon>
        <taxon>Firstpapillomavirinae</taxon>
        <taxon>Betapapillomavirus</taxon>
        <taxon>Betapapillomavirus 1</taxon>
    </lineage>
</organism>
<organismHost>
    <name type="scientific">Homo sapiens</name>
    <name type="common">Human</name>
    <dbReference type="NCBI Taxonomy" id="9606"/>
</organismHost>
<feature type="chain" id="PRO_0000133262" description="Protein E4">
    <location>
        <begin position="1"/>
        <end position="222"/>
    </location>
</feature>
<feature type="region of interest" description="Disordered" evidence="2">
    <location>
        <begin position="1"/>
        <end position="184"/>
    </location>
</feature>
<feature type="compositionally biased region" description="Basic and acidic residues" evidence="2">
    <location>
        <begin position="1"/>
        <end position="16"/>
    </location>
</feature>
<feature type="compositionally biased region" description="Pro residues" evidence="2">
    <location>
        <begin position="20"/>
        <end position="32"/>
    </location>
</feature>
<feature type="compositionally biased region" description="Basic and acidic residues" evidence="2">
    <location>
        <begin position="48"/>
        <end position="73"/>
    </location>
</feature>
<feature type="compositionally biased region" description="Low complexity" evidence="2">
    <location>
        <begin position="76"/>
        <end position="89"/>
    </location>
</feature>
<feature type="compositionally biased region" description="Pro residues" evidence="2">
    <location>
        <begin position="90"/>
        <end position="101"/>
    </location>
</feature>
<feature type="compositionally biased region" description="Pro residues" evidence="2">
    <location>
        <begin position="170"/>
        <end position="179"/>
    </location>
</feature>
<reference key="1">
    <citation type="journal article" date="1986" name="J. Virol.">
        <title>Epidermodysplasia verruciformis-associated human papillomavirus 8: genomic sequence and comparative analysis.</title>
        <authorList>
            <person name="Fuchs P.G."/>
            <person name="Iftner T."/>
            <person name="Weninger J."/>
            <person name="Pfister H."/>
        </authorList>
    </citation>
    <scope>NUCLEOTIDE SEQUENCE [GENOMIC DNA]</scope>
</reference>
<evidence type="ECO:0000250" key="1">
    <source>
        <dbReference type="UniProtKB" id="P06922"/>
    </source>
</evidence>
<evidence type="ECO:0000256" key="2">
    <source>
        <dbReference type="SAM" id="MobiDB-lite"/>
    </source>
</evidence>
<evidence type="ECO:0000305" key="3"/>
<name>VE4_HPV08</name>
<gene>
    <name type="primary">E4</name>
</gene>
<sequence length="222" mass="23409">MADHKAPPPPDHHQDKQTQTPPPRPPPPPLTPRPDSSGPLQNSHNKPKPKDEGTGDGRPAEQDRKKSRGDQGRDTAPGLAPGRSPGLGPLAPPPYPGPGPRRSPRQFGPGPDRDPEDGLQPPLGEGQVEGHPGDGDQPQGHPPPTPSNGHKGEEGDGEEEGAVGGDGNDHPPPPPPPPNVQEGSLLGCVGSLLLKWEDQFNLLVQNIQGDLEDYWTKLSTPQ</sequence>
<protein>
    <recommendedName>
        <fullName>Protein E4</fullName>
    </recommendedName>
</protein>